<comment type="function">
    <text evidence="1">Intracellular phospholipase B that catalyzes the double deacylation of phosphatidylcholine (PC) to glycerophosphocholine (GroPCho). Plays an important role in membrane lipid homeostasis. Responsible for the rapid PC turnover in response to inositol, elevated temperatures, or when choline is present in the growth medium (By similarity).</text>
</comment>
<comment type="catalytic activity">
    <reaction>
        <text>a 1-acyl-sn-glycero-3-phosphocholine + H2O = sn-glycerol 3-phosphocholine + a fatty acid + H(+)</text>
        <dbReference type="Rhea" id="RHEA:15177"/>
        <dbReference type="ChEBI" id="CHEBI:15377"/>
        <dbReference type="ChEBI" id="CHEBI:15378"/>
        <dbReference type="ChEBI" id="CHEBI:16870"/>
        <dbReference type="ChEBI" id="CHEBI:28868"/>
        <dbReference type="ChEBI" id="CHEBI:58168"/>
        <dbReference type="EC" id="3.1.1.5"/>
    </reaction>
</comment>
<comment type="activity regulation">
    <text evidence="1">Inhibited by organophosphorus esters.</text>
</comment>
<comment type="subcellular location">
    <subcellularLocation>
        <location evidence="1">Endoplasmic reticulum membrane</location>
        <topology evidence="1">Multi-pass membrane protein</topology>
    </subcellularLocation>
</comment>
<comment type="similarity">
    <text evidence="5">Belongs to the NTE family.</text>
</comment>
<dbReference type="EC" id="3.1.1.5"/>
<dbReference type="EMBL" id="CM003141">
    <property type="protein sequence ID" value="KIS71330.1"/>
    <property type="molecule type" value="Genomic_DNA"/>
</dbReference>
<dbReference type="RefSeq" id="XP_011387164.1">
    <property type="nucleotide sequence ID" value="XM_011388862.1"/>
</dbReference>
<dbReference type="SMR" id="Q4PF83"/>
<dbReference type="FunCoup" id="Q4PF83">
    <property type="interactions" value="114"/>
</dbReference>
<dbReference type="STRING" id="237631.Q4PF83"/>
<dbReference type="EnsemblFungi" id="KIS71330">
    <property type="protein sequence ID" value="KIS71330"/>
    <property type="gene ID" value="UMAG_01230"/>
</dbReference>
<dbReference type="GeneID" id="23562320"/>
<dbReference type="KEGG" id="uma:UMAG_01230"/>
<dbReference type="VEuPathDB" id="FungiDB:UMAG_01230"/>
<dbReference type="eggNOG" id="KOG2968">
    <property type="taxonomic scope" value="Eukaryota"/>
</dbReference>
<dbReference type="HOGENOM" id="CLU_000960_1_1_1"/>
<dbReference type="InParanoid" id="Q4PF83"/>
<dbReference type="OMA" id="HTAHKYL"/>
<dbReference type="OrthoDB" id="421051at2759"/>
<dbReference type="Proteomes" id="UP000000561">
    <property type="component" value="Chromosome 2"/>
</dbReference>
<dbReference type="GO" id="GO:0005783">
    <property type="term" value="C:endoplasmic reticulum"/>
    <property type="evidence" value="ECO:0000318"/>
    <property type="project" value="GO_Central"/>
</dbReference>
<dbReference type="GO" id="GO:0005789">
    <property type="term" value="C:endoplasmic reticulum membrane"/>
    <property type="evidence" value="ECO:0007669"/>
    <property type="project" value="UniProtKB-SubCell"/>
</dbReference>
<dbReference type="GO" id="GO:0004622">
    <property type="term" value="F:lysophospholipase activity"/>
    <property type="evidence" value="ECO:0000318"/>
    <property type="project" value="GO_Central"/>
</dbReference>
<dbReference type="GO" id="GO:0016042">
    <property type="term" value="P:lipid catabolic process"/>
    <property type="evidence" value="ECO:0007669"/>
    <property type="project" value="UniProtKB-KW"/>
</dbReference>
<dbReference type="GO" id="GO:0046470">
    <property type="term" value="P:phosphatidylcholine metabolic process"/>
    <property type="evidence" value="ECO:0007669"/>
    <property type="project" value="InterPro"/>
</dbReference>
<dbReference type="CDD" id="cd00038">
    <property type="entry name" value="CAP_ED"/>
    <property type="match status" value="2"/>
</dbReference>
<dbReference type="FunFam" id="2.60.120.10:FF:000062">
    <property type="entry name" value="Lysophospholipase NTE1"/>
    <property type="match status" value="1"/>
</dbReference>
<dbReference type="FunFam" id="3.40.1090.10:FF:000007">
    <property type="entry name" value="Lysophospholipase NTE1"/>
    <property type="match status" value="1"/>
</dbReference>
<dbReference type="FunFam" id="3.40.1090.10:FF:000013">
    <property type="entry name" value="Lysophospholipase NTE1"/>
    <property type="match status" value="1"/>
</dbReference>
<dbReference type="Gene3D" id="3.40.1090.10">
    <property type="entry name" value="Cytosolic phospholipase A2 catalytic domain"/>
    <property type="match status" value="2"/>
</dbReference>
<dbReference type="Gene3D" id="2.60.120.10">
    <property type="entry name" value="Jelly Rolls"/>
    <property type="match status" value="2"/>
</dbReference>
<dbReference type="InterPro" id="IPR016035">
    <property type="entry name" value="Acyl_Trfase/lysoPLipase"/>
</dbReference>
<dbReference type="InterPro" id="IPR000595">
    <property type="entry name" value="cNMP-bd_dom"/>
</dbReference>
<dbReference type="InterPro" id="IPR018490">
    <property type="entry name" value="cNMP-bd_dom_sf"/>
</dbReference>
<dbReference type="InterPro" id="IPR001423">
    <property type="entry name" value="LysoPLipase_patatin_CS"/>
</dbReference>
<dbReference type="InterPro" id="IPR050301">
    <property type="entry name" value="NTE"/>
</dbReference>
<dbReference type="InterPro" id="IPR056556">
    <property type="entry name" value="NTE1_P-loop_dom"/>
</dbReference>
<dbReference type="InterPro" id="IPR002641">
    <property type="entry name" value="PNPLA_dom"/>
</dbReference>
<dbReference type="InterPro" id="IPR014710">
    <property type="entry name" value="RmlC-like_jellyroll"/>
</dbReference>
<dbReference type="PANTHER" id="PTHR14226:SF29">
    <property type="entry name" value="NEUROPATHY TARGET ESTERASE SWS"/>
    <property type="match status" value="1"/>
</dbReference>
<dbReference type="PANTHER" id="PTHR14226">
    <property type="entry name" value="NEUROPATHY TARGET ESTERASE/SWISS CHEESE D.MELANOGASTER"/>
    <property type="match status" value="1"/>
</dbReference>
<dbReference type="Pfam" id="PF00027">
    <property type="entry name" value="cNMP_binding"/>
    <property type="match status" value="1"/>
</dbReference>
<dbReference type="Pfam" id="PF24179">
    <property type="entry name" value="NTE_Ploop"/>
    <property type="match status" value="1"/>
</dbReference>
<dbReference type="Pfam" id="PF01734">
    <property type="entry name" value="Patatin"/>
    <property type="match status" value="1"/>
</dbReference>
<dbReference type="SMART" id="SM00100">
    <property type="entry name" value="cNMP"/>
    <property type="match status" value="1"/>
</dbReference>
<dbReference type="SUPFAM" id="SSF51206">
    <property type="entry name" value="cAMP-binding domain-like"/>
    <property type="match status" value="3"/>
</dbReference>
<dbReference type="SUPFAM" id="SSF52151">
    <property type="entry name" value="FabD/lysophospholipase-like"/>
    <property type="match status" value="1"/>
</dbReference>
<dbReference type="PROSITE" id="PS50042">
    <property type="entry name" value="CNMP_BINDING_3"/>
    <property type="match status" value="2"/>
</dbReference>
<dbReference type="PROSITE" id="PS51635">
    <property type="entry name" value="PNPLA"/>
    <property type="match status" value="1"/>
</dbReference>
<dbReference type="PROSITE" id="PS01237">
    <property type="entry name" value="UPF0028"/>
    <property type="match status" value="1"/>
</dbReference>
<reference key="1">
    <citation type="journal article" date="2006" name="Nature">
        <title>Insights from the genome of the biotrophic fungal plant pathogen Ustilago maydis.</title>
        <authorList>
            <person name="Kaemper J."/>
            <person name="Kahmann R."/>
            <person name="Boelker M."/>
            <person name="Ma L.-J."/>
            <person name="Brefort T."/>
            <person name="Saville B.J."/>
            <person name="Banuett F."/>
            <person name="Kronstad J.W."/>
            <person name="Gold S.E."/>
            <person name="Mueller O."/>
            <person name="Perlin M.H."/>
            <person name="Woesten H.A.B."/>
            <person name="de Vries R."/>
            <person name="Ruiz-Herrera J."/>
            <person name="Reynaga-Pena C.G."/>
            <person name="Snetselaar K."/>
            <person name="McCann M."/>
            <person name="Perez-Martin J."/>
            <person name="Feldbruegge M."/>
            <person name="Basse C.W."/>
            <person name="Steinberg G."/>
            <person name="Ibeas J.I."/>
            <person name="Holloman W."/>
            <person name="Guzman P."/>
            <person name="Farman M.L."/>
            <person name="Stajich J.E."/>
            <person name="Sentandreu R."/>
            <person name="Gonzalez-Prieto J.M."/>
            <person name="Kennell J.C."/>
            <person name="Molina L."/>
            <person name="Schirawski J."/>
            <person name="Mendoza-Mendoza A."/>
            <person name="Greilinger D."/>
            <person name="Muench K."/>
            <person name="Roessel N."/>
            <person name="Scherer M."/>
            <person name="Vranes M."/>
            <person name="Ladendorf O."/>
            <person name="Vincon V."/>
            <person name="Fuchs U."/>
            <person name="Sandrock B."/>
            <person name="Meng S."/>
            <person name="Ho E.C.H."/>
            <person name="Cahill M.J."/>
            <person name="Boyce K.J."/>
            <person name="Klose J."/>
            <person name="Klosterman S.J."/>
            <person name="Deelstra H.J."/>
            <person name="Ortiz-Castellanos L."/>
            <person name="Li W."/>
            <person name="Sanchez-Alonso P."/>
            <person name="Schreier P.H."/>
            <person name="Haeuser-Hahn I."/>
            <person name="Vaupel M."/>
            <person name="Koopmann E."/>
            <person name="Friedrich G."/>
            <person name="Voss H."/>
            <person name="Schlueter T."/>
            <person name="Margolis J."/>
            <person name="Platt D."/>
            <person name="Swimmer C."/>
            <person name="Gnirke A."/>
            <person name="Chen F."/>
            <person name="Vysotskaia V."/>
            <person name="Mannhaupt G."/>
            <person name="Gueldener U."/>
            <person name="Muensterkoetter M."/>
            <person name="Haase D."/>
            <person name="Oesterheld M."/>
            <person name="Mewes H.-W."/>
            <person name="Mauceli E.W."/>
            <person name="DeCaprio D."/>
            <person name="Wade C.M."/>
            <person name="Butler J."/>
            <person name="Young S.K."/>
            <person name="Jaffe D.B."/>
            <person name="Calvo S.E."/>
            <person name="Nusbaum C."/>
            <person name="Galagan J.E."/>
            <person name="Birren B.W."/>
        </authorList>
    </citation>
    <scope>NUCLEOTIDE SEQUENCE [LARGE SCALE GENOMIC DNA]</scope>
    <source>
        <strain>DSM 14603 / FGSC 9021 / UM521</strain>
    </source>
</reference>
<reference key="2">
    <citation type="submission" date="2014-09" db="EMBL/GenBank/DDBJ databases">
        <authorList>
            <person name="Gueldener U."/>
            <person name="Muensterkoetter M."/>
            <person name="Walter M.C."/>
            <person name="Mannhaupt G."/>
            <person name="Kahmann R."/>
        </authorList>
    </citation>
    <scope>GENOME REANNOTATION</scope>
    <source>
        <strain>DSM 14603 / FGSC 9021 / UM521</strain>
    </source>
</reference>
<gene>
    <name type="primary">NTE1</name>
    <name type="ORF">UMAG_01230</name>
</gene>
<sequence>MSQVPVASPASWSSVASAAAAAVSAATSASSSLAASVDEPAATTATAATASYADERNPLIALFDGLLRVVLASLNLIRILATFSTITVPSLVYAILHYSLTLQLNFPSLALLFLTSLISAFIWLRYRHLNKYERLREVPITRDEGFNLNPDVASPGGDNDRGSFHNYLDDFLQAIRIFGFLEKPVFHELARHLQTRRLVAGDSLSLDTDFSFYIVIDGHVQVYAPLPSATASAVGQDSVEDEDDSGYQLLNEVESGGTLSSLFTILSLFTEDVKLSFDDHDDPHLAPPHPAYPAMDRLNNSSAANHLGRGNNATAPTSPYSSAFNPPSQTAAQLQLNAAALRNVPAAISTEGAVERLGGSAAVRSTSKSSHARTASSGTASATVQDGDTSTIMDPLEQNDDGVTSSLYHAPDLQMPPAQAAAPFSHFAPSYHPSPAGTPISSLPGSTHSPYFRGRATSIHALHEAAGGPNTPGSILSAMSSSAHGHYHPQADYLPRQGAGTVARATVDTTLAVIPAEAFKRLTKKFPNAAAHIVQVILARLSRVTFHTAHKYLGLTKEVMRTEKSINDLACFPLPSEFYEKGGMDKLRHRFLPQPNSKRETTVDDDYFRDFQEWTSISQRSSTPVPGSKDDTKDAATSSPPKVRIASDLPSLTTSSKQSNQKPTSSRISAARTPWGHPDPPLKTPTARNMVGPGDLLSMASLSQDGWYTTGFDMHSAQPTPRAKPRSVSKLEPFHGPLPHPVDDSTDGTSPLSGASPIPIRKGSSTMYHQGEAIGTDRPFANIGLPHFDIKNEVMDCIAKSIGLAQAAHSPLAPSYQASPHINAQDSLLQRSVFKSAFGSLSMLDAAMAEEESSITGTNSSMAGHGHSGFHPSDFENEVEIKFFPAGSTLVKAGESRAGLFYVIDGFLDVLLPAEANELEEEDRLKPNMNHKSAKTDASSGSSRQNRPGSHRKDSSSASLRAGLLDERNLREADVSLPQRRGTEADRISSNGDGNSGSVHRPAMREGSSSSTSYGTPAGLRKKPTESAKVGNALDGTGGAGSSSRRKPSHVSSGSGATTMPRHPDATNSNMAFTAKQPVLHPSLHQQQPLRGKPSQQSSQRSKDGKRSIFTVGRGGIAGYLSSLLGTASYVDITAKTDVYVGFLPAHALERIMERRPIVLLTLCKRLLSLLPPLILHIDSSLDWQQVNAGQVIYREDDPSDSFFIVINGRLRAITEKTNGIEVHNEYGQGDSVGELDVITNSRRRTTLHAIRDSELAKMPSTLFNAISVRHPAITIQISRIIARRVRTELVRSKQEGAALGAPIPGLPDLGRNNLNLKTVAIVPVTRQVPVIDFAAKLQTAFDDTIGGRAIFLDQSSVMGVLGRHAFSRMGKLKLAGWLADLEQKYRLVVYVVDTPVSSAWSQTSIRQADCVLMVGFGDEPAMGEYERLLMSVKTTARKELVLLHPERSVPPGSTREWLKNRPWVHAHHHVEMPGLTGSHAGAAISTGGDPKAVKALRNLKQKLETSLQRYRKTMTPLSASGRPHHASDFARLARRLCGMSIGLVLGGGGARGCAHLGVIRALEERGIPIDMVGGTSIGSLVGGLYAREAEMVSTFGRAKRFAGRMASLWRFASDLTYPVVSYTTGHEFNRGVFKAIQETHIEDMWIPFFCNTTNITWSRMEVHTSGYAWRYIRGSMTLAGLIPPLVDEGNMLVDGGYVDNLPVTVMLAMGARSVFAVDVGSIDDTSPRAYGDTLSGWWVLLNRWNPWSDASKIPSIPDIQGRLTYVSSVKTLEEAKKVKGCFYMRMPVEEFGTLAFGRFDMIYEKGYKAAVELLDGWDAEGKLPSGTEREDFEDDWEDGDEYEEYEVYTDDESGVGGGVRKIRKKRRRTRRKAGISARRNSI</sequence>
<feature type="chain" id="PRO_0000295331" description="Lysophospholipase NTE1">
    <location>
        <begin position="1"/>
        <end position="1883"/>
    </location>
</feature>
<feature type="topological domain" description="Cytoplasmic" evidence="1">
    <location>
        <begin position="1"/>
        <end position="75"/>
    </location>
</feature>
<feature type="transmembrane region" description="Helical" evidence="2">
    <location>
        <begin position="76"/>
        <end position="96"/>
    </location>
</feature>
<feature type="topological domain" description="Lumenal" evidence="1">
    <location>
        <begin position="97"/>
        <end position="103"/>
    </location>
</feature>
<feature type="transmembrane region" description="Helical" evidence="2">
    <location>
        <begin position="104"/>
        <end position="124"/>
    </location>
</feature>
<feature type="topological domain" description="Cytoplasmic" evidence="1">
    <location>
        <begin position="125"/>
        <end position="1883"/>
    </location>
</feature>
<feature type="domain" description="PNPLA" evidence="3">
    <location>
        <begin position="1544"/>
        <end position="1708"/>
    </location>
</feature>
<feature type="region of interest" description="Disordered" evidence="4">
    <location>
        <begin position="284"/>
        <end position="327"/>
    </location>
</feature>
<feature type="region of interest" description="Disordered" evidence="4">
    <location>
        <begin position="355"/>
        <end position="410"/>
    </location>
</feature>
<feature type="region of interest" description="Disordered" evidence="4">
    <location>
        <begin position="618"/>
        <end position="693"/>
    </location>
</feature>
<feature type="region of interest" description="Disordered" evidence="4">
    <location>
        <begin position="716"/>
        <end position="764"/>
    </location>
</feature>
<feature type="region of interest" description="Disordered" evidence="4">
    <location>
        <begin position="921"/>
        <end position="1069"/>
    </location>
</feature>
<feature type="region of interest" description="Disordered" evidence="4">
    <location>
        <begin position="1084"/>
        <end position="1108"/>
    </location>
</feature>
<feature type="region of interest" description="Disordered" evidence="4">
    <location>
        <begin position="1852"/>
        <end position="1883"/>
    </location>
</feature>
<feature type="short sequence motif" description="GXGXXG" evidence="3">
    <location>
        <begin position="1548"/>
        <end position="1553"/>
    </location>
</feature>
<feature type="short sequence motif" description="GXSXG" evidence="3">
    <location>
        <begin position="1575"/>
        <end position="1579"/>
    </location>
</feature>
<feature type="short sequence motif" description="DGA/G" evidence="3">
    <location>
        <begin position="1695"/>
        <end position="1697"/>
    </location>
</feature>
<feature type="compositionally biased region" description="Polar residues" evidence="4">
    <location>
        <begin position="311"/>
        <end position="327"/>
    </location>
</feature>
<feature type="compositionally biased region" description="Low complexity" evidence="4">
    <location>
        <begin position="372"/>
        <end position="383"/>
    </location>
</feature>
<feature type="compositionally biased region" description="Polar residues" evidence="4">
    <location>
        <begin position="650"/>
        <end position="668"/>
    </location>
</feature>
<feature type="compositionally biased region" description="Polar residues" evidence="4">
    <location>
        <begin position="936"/>
        <end position="948"/>
    </location>
</feature>
<feature type="compositionally biased region" description="Basic and acidic residues" evidence="4">
    <location>
        <begin position="964"/>
        <end position="974"/>
    </location>
</feature>
<feature type="compositionally biased region" description="Polar residues" evidence="4">
    <location>
        <begin position="988"/>
        <end position="998"/>
    </location>
</feature>
<feature type="compositionally biased region" description="Polar residues" evidence="4">
    <location>
        <begin position="1084"/>
        <end position="1100"/>
    </location>
</feature>
<feature type="compositionally biased region" description="Basic residues" evidence="4">
    <location>
        <begin position="1861"/>
        <end position="1874"/>
    </location>
</feature>
<feature type="active site" description="Nucleophile" evidence="3">
    <location>
        <position position="1577"/>
    </location>
</feature>
<feature type="active site" description="Proton acceptor" evidence="3">
    <location>
        <position position="1695"/>
    </location>
</feature>
<feature type="binding site">
    <location>
        <begin position="863"/>
        <end position="1158"/>
    </location>
    <ligand>
        <name>a nucleoside 3',5'-cyclic phosphate</name>
        <dbReference type="ChEBI" id="CHEBI:58464"/>
        <label>1</label>
    </ligand>
</feature>
<feature type="binding site">
    <location>
        <begin position="1166"/>
        <end position="1285"/>
    </location>
    <ligand>
        <name>a nucleoside 3',5'-cyclic phosphate</name>
        <dbReference type="ChEBI" id="CHEBI:58464"/>
        <label>2</label>
    </ligand>
</feature>
<evidence type="ECO:0000250" key="1"/>
<evidence type="ECO:0000255" key="2"/>
<evidence type="ECO:0000255" key="3">
    <source>
        <dbReference type="PROSITE-ProRule" id="PRU01161"/>
    </source>
</evidence>
<evidence type="ECO:0000256" key="4">
    <source>
        <dbReference type="SAM" id="MobiDB-lite"/>
    </source>
</evidence>
<evidence type="ECO:0000305" key="5"/>
<accession>Q4PF83</accession>
<accession>A0A0D1EAB5</accession>
<organism>
    <name type="scientific">Mycosarcoma maydis</name>
    <name type="common">Corn smut fungus</name>
    <name type="synonym">Ustilago maydis</name>
    <dbReference type="NCBI Taxonomy" id="5270"/>
    <lineage>
        <taxon>Eukaryota</taxon>
        <taxon>Fungi</taxon>
        <taxon>Dikarya</taxon>
        <taxon>Basidiomycota</taxon>
        <taxon>Ustilaginomycotina</taxon>
        <taxon>Ustilaginomycetes</taxon>
        <taxon>Ustilaginales</taxon>
        <taxon>Ustilaginaceae</taxon>
        <taxon>Mycosarcoma</taxon>
    </lineage>
</organism>
<name>NTE1_MYCMD</name>
<protein>
    <recommendedName>
        <fullName>Lysophospholipase NTE1</fullName>
        <ecNumber>3.1.1.5</ecNumber>
    </recommendedName>
    <alternativeName>
        <fullName>Intracellular phospholipase B</fullName>
    </alternativeName>
    <alternativeName>
        <fullName>Neuropathy target esterase homolog</fullName>
    </alternativeName>
</protein>
<proteinExistence type="inferred from homology"/>
<keyword id="KW-0256">Endoplasmic reticulum</keyword>
<keyword id="KW-0378">Hydrolase</keyword>
<keyword id="KW-0442">Lipid degradation</keyword>
<keyword id="KW-0443">Lipid metabolism</keyword>
<keyword id="KW-0472">Membrane</keyword>
<keyword id="KW-1185">Reference proteome</keyword>
<keyword id="KW-0677">Repeat</keyword>
<keyword id="KW-0812">Transmembrane</keyword>
<keyword id="KW-1133">Transmembrane helix</keyword>